<sequence length="626" mass="66860">MRNSYDVIVIGGGHAGCEAAAAAARLGAATALVTHRFATVGAMSCNPAIGGLGKGHLVREVDALDGLMGRVADAGGIQFRMLNRRKGPAVRGPRAQADRKLYAAAMQAAIRATANLRVIEGEADTLLNEAGRVTGIRLADGRELVAGAVVITTGTFLRGLIHLGEQCWPAGRIDEAPALGLSASFEALGLALGRLKTGTPPRLDGRTIDWGAVEMQPGDDPPEPFSVLTPAITTPQIECGITRTLPATHEVIRANVHRSPMYSGQIQSSGPRYCPSIEDKIVKFGDRDGHQIFLEPEGLDDPTVYPNGISTSLPEEVQRAILATIPGLERTVMLRPGYAIEYDHVDPRELEPTLQTKRLRGLYLAGQINGTTGYEEAAAQGLVAGLNAALAAGGGEGVVFDRADGYLGVMIDDLVTRGISEPYRMFTSRAEYRLTLRADNADQRLTDKGLALGCVGTERAAFHRGKMAALAEAKALAQSLAITPNEAARHGLSLNRDGQRRSAFDLLSYPEIEWPQVRAIWPELAAVSPSIAGHVEIDAKYAVYLERQVADVAAFRRDEGLLLTDVDYAQVPGLSNEARGRLERHRPRTVGQAGRLDGITPAALGILAAYLRREARKRPAVVDGEG</sequence>
<comment type="function">
    <text evidence="1">NAD-binding protein involved in the addition of a carboxymethylaminomethyl (cmnm) group at the wobble position (U34) of certain tRNAs, forming tRNA-cmnm(5)s(2)U34.</text>
</comment>
<comment type="cofactor">
    <cofactor evidence="1">
        <name>FAD</name>
        <dbReference type="ChEBI" id="CHEBI:57692"/>
    </cofactor>
</comment>
<comment type="subunit">
    <text evidence="1">Homodimer. Heterotetramer of two MnmE and two MnmG subunits.</text>
</comment>
<comment type="subcellular location">
    <subcellularLocation>
        <location evidence="1">Cytoplasm</location>
    </subcellularLocation>
</comment>
<comment type="similarity">
    <text evidence="1">Belongs to the MnmG family.</text>
</comment>
<dbReference type="EMBL" id="CP000250">
    <property type="protein sequence ID" value="ABD05102.1"/>
    <property type="molecule type" value="Genomic_DNA"/>
</dbReference>
<dbReference type="RefSeq" id="WP_011439292.1">
    <property type="nucleotide sequence ID" value="NC_007778.1"/>
</dbReference>
<dbReference type="SMR" id="Q2J358"/>
<dbReference type="STRING" id="316058.RPB_0391"/>
<dbReference type="KEGG" id="rpb:RPB_0391"/>
<dbReference type="eggNOG" id="COG0445">
    <property type="taxonomic scope" value="Bacteria"/>
</dbReference>
<dbReference type="HOGENOM" id="CLU_007831_2_2_5"/>
<dbReference type="OrthoDB" id="9815560at2"/>
<dbReference type="Proteomes" id="UP000008809">
    <property type="component" value="Chromosome"/>
</dbReference>
<dbReference type="GO" id="GO:0005829">
    <property type="term" value="C:cytosol"/>
    <property type="evidence" value="ECO:0007669"/>
    <property type="project" value="TreeGrafter"/>
</dbReference>
<dbReference type="GO" id="GO:0050660">
    <property type="term" value="F:flavin adenine dinucleotide binding"/>
    <property type="evidence" value="ECO:0007669"/>
    <property type="project" value="UniProtKB-UniRule"/>
</dbReference>
<dbReference type="GO" id="GO:0030488">
    <property type="term" value="P:tRNA methylation"/>
    <property type="evidence" value="ECO:0007669"/>
    <property type="project" value="TreeGrafter"/>
</dbReference>
<dbReference type="GO" id="GO:0002098">
    <property type="term" value="P:tRNA wobble uridine modification"/>
    <property type="evidence" value="ECO:0007669"/>
    <property type="project" value="InterPro"/>
</dbReference>
<dbReference type="FunFam" id="3.50.50.60:FF:000082">
    <property type="entry name" value="protein MTO1 homolog, mitochondrial isoform X1"/>
    <property type="match status" value="1"/>
</dbReference>
<dbReference type="FunFam" id="1.10.150.570:FF:000001">
    <property type="entry name" value="tRNA uridine 5-carboxymethylaminomethyl modification enzyme MnmG"/>
    <property type="match status" value="1"/>
</dbReference>
<dbReference type="FunFam" id="3.50.50.60:FF:000002">
    <property type="entry name" value="tRNA uridine 5-carboxymethylaminomethyl modification enzyme MnmG"/>
    <property type="match status" value="1"/>
</dbReference>
<dbReference type="Gene3D" id="3.50.50.60">
    <property type="entry name" value="FAD/NAD(P)-binding domain"/>
    <property type="match status" value="2"/>
</dbReference>
<dbReference type="Gene3D" id="1.10.150.570">
    <property type="entry name" value="GidA associated domain, C-terminal subdomain"/>
    <property type="match status" value="1"/>
</dbReference>
<dbReference type="Gene3D" id="1.10.10.1800">
    <property type="entry name" value="tRNA uridine 5-carboxymethylaminomethyl modification enzyme MnmG/GidA"/>
    <property type="match status" value="1"/>
</dbReference>
<dbReference type="HAMAP" id="MF_00129">
    <property type="entry name" value="MnmG_GidA"/>
    <property type="match status" value="1"/>
</dbReference>
<dbReference type="InterPro" id="IPR036188">
    <property type="entry name" value="FAD/NAD-bd_sf"/>
</dbReference>
<dbReference type="InterPro" id="IPR049312">
    <property type="entry name" value="GIDA_C_N"/>
</dbReference>
<dbReference type="InterPro" id="IPR004416">
    <property type="entry name" value="MnmG"/>
</dbReference>
<dbReference type="InterPro" id="IPR002218">
    <property type="entry name" value="MnmG-rel"/>
</dbReference>
<dbReference type="InterPro" id="IPR020595">
    <property type="entry name" value="MnmG-rel_CS"/>
</dbReference>
<dbReference type="InterPro" id="IPR026904">
    <property type="entry name" value="MnmG_C"/>
</dbReference>
<dbReference type="InterPro" id="IPR047001">
    <property type="entry name" value="MnmG_C_subdom"/>
</dbReference>
<dbReference type="InterPro" id="IPR044920">
    <property type="entry name" value="MnmG_C_subdom_sf"/>
</dbReference>
<dbReference type="InterPro" id="IPR040131">
    <property type="entry name" value="MnmG_N"/>
</dbReference>
<dbReference type="NCBIfam" id="TIGR00136">
    <property type="entry name" value="mnmG_gidA"/>
    <property type="match status" value="1"/>
</dbReference>
<dbReference type="PANTHER" id="PTHR11806">
    <property type="entry name" value="GLUCOSE INHIBITED DIVISION PROTEIN A"/>
    <property type="match status" value="1"/>
</dbReference>
<dbReference type="PANTHER" id="PTHR11806:SF0">
    <property type="entry name" value="PROTEIN MTO1 HOMOLOG, MITOCHONDRIAL"/>
    <property type="match status" value="1"/>
</dbReference>
<dbReference type="Pfam" id="PF01134">
    <property type="entry name" value="GIDA"/>
    <property type="match status" value="1"/>
</dbReference>
<dbReference type="Pfam" id="PF21680">
    <property type="entry name" value="GIDA_C_1st"/>
    <property type="match status" value="1"/>
</dbReference>
<dbReference type="Pfam" id="PF13932">
    <property type="entry name" value="SAM_GIDA_C"/>
    <property type="match status" value="1"/>
</dbReference>
<dbReference type="PRINTS" id="PR00411">
    <property type="entry name" value="PNDRDTASEI"/>
</dbReference>
<dbReference type="SMART" id="SM01228">
    <property type="entry name" value="GIDA_assoc_3"/>
    <property type="match status" value="1"/>
</dbReference>
<dbReference type="SUPFAM" id="SSF51905">
    <property type="entry name" value="FAD/NAD(P)-binding domain"/>
    <property type="match status" value="1"/>
</dbReference>
<dbReference type="PROSITE" id="PS01280">
    <property type="entry name" value="GIDA_1"/>
    <property type="match status" value="1"/>
</dbReference>
<dbReference type="PROSITE" id="PS01281">
    <property type="entry name" value="GIDA_2"/>
    <property type="match status" value="1"/>
</dbReference>
<gene>
    <name evidence="1" type="primary">mnmG</name>
    <name evidence="1" type="synonym">gidA</name>
    <name type="ordered locus">RPB_0391</name>
</gene>
<reference key="1">
    <citation type="submission" date="2006-01" db="EMBL/GenBank/DDBJ databases">
        <title>Complete sequence of Rhodopseudomonas palustris HaA2.</title>
        <authorList>
            <consortium name="US DOE Joint Genome Institute"/>
            <person name="Copeland A."/>
            <person name="Lucas S."/>
            <person name="Lapidus A."/>
            <person name="Barry K."/>
            <person name="Detter J.C."/>
            <person name="Glavina T."/>
            <person name="Hammon N."/>
            <person name="Israni S."/>
            <person name="Pitluck S."/>
            <person name="Chain P."/>
            <person name="Malfatti S."/>
            <person name="Shin M."/>
            <person name="Vergez L."/>
            <person name="Schmutz J."/>
            <person name="Larimer F."/>
            <person name="Land M."/>
            <person name="Hauser L."/>
            <person name="Pelletier D.A."/>
            <person name="Kyrpides N."/>
            <person name="Anderson I."/>
            <person name="Oda Y."/>
            <person name="Harwood C.S."/>
            <person name="Richardson P."/>
        </authorList>
    </citation>
    <scope>NUCLEOTIDE SEQUENCE [LARGE SCALE GENOMIC DNA]</scope>
    <source>
        <strain>HaA2</strain>
    </source>
</reference>
<protein>
    <recommendedName>
        <fullName evidence="1">tRNA uridine 5-carboxymethylaminomethyl modification enzyme MnmG</fullName>
    </recommendedName>
    <alternativeName>
        <fullName evidence="1">Glucose-inhibited division protein A</fullName>
    </alternativeName>
</protein>
<proteinExistence type="inferred from homology"/>
<feature type="chain" id="PRO_1000016657" description="tRNA uridine 5-carboxymethylaminomethyl modification enzyme MnmG">
    <location>
        <begin position="1"/>
        <end position="626"/>
    </location>
</feature>
<feature type="binding site" evidence="1">
    <location>
        <begin position="11"/>
        <end position="16"/>
    </location>
    <ligand>
        <name>FAD</name>
        <dbReference type="ChEBI" id="CHEBI:57692"/>
    </ligand>
</feature>
<feature type="binding site" evidence="1">
    <location>
        <begin position="270"/>
        <end position="284"/>
    </location>
    <ligand>
        <name>NAD(+)</name>
        <dbReference type="ChEBI" id="CHEBI:57540"/>
    </ligand>
</feature>
<organism>
    <name type="scientific">Rhodopseudomonas palustris (strain HaA2)</name>
    <dbReference type="NCBI Taxonomy" id="316058"/>
    <lineage>
        <taxon>Bacteria</taxon>
        <taxon>Pseudomonadati</taxon>
        <taxon>Pseudomonadota</taxon>
        <taxon>Alphaproteobacteria</taxon>
        <taxon>Hyphomicrobiales</taxon>
        <taxon>Nitrobacteraceae</taxon>
        <taxon>Rhodopseudomonas</taxon>
    </lineage>
</organism>
<name>MNMG_RHOP2</name>
<keyword id="KW-0963">Cytoplasm</keyword>
<keyword id="KW-0274">FAD</keyword>
<keyword id="KW-0285">Flavoprotein</keyword>
<keyword id="KW-0520">NAD</keyword>
<keyword id="KW-1185">Reference proteome</keyword>
<keyword id="KW-0819">tRNA processing</keyword>
<evidence type="ECO:0000255" key="1">
    <source>
        <dbReference type="HAMAP-Rule" id="MF_00129"/>
    </source>
</evidence>
<accession>Q2J358</accession>